<organism>
    <name type="scientific">Lycosa singoriensis</name>
    <name type="common">Wolf spider</name>
    <name type="synonym">Aranea singoriensis</name>
    <dbReference type="NCBI Taxonomy" id="434756"/>
    <lineage>
        <taxon>Eukaryota</taxon>
        <taxon>Metazoa</taxon>
        <taxon>Ecdysozoa</taxon>
        <taxon>Arthropoda</taxon>
        <taxon>Chelicerata</taxon>
        <taxon>Arachnida</taxon>
        <taxon>Araneae</taxon>
        <taxon>Araneomorphae</taxon>
        <taxon>Entelegynae</taxon>
        <taxon>Lycosoidea</taxon>
        <taxon>Lycosidae</taxon>
        <taxon>Lycosa</taxon>
    </lineage>
</organism>
<keyword id="KW-1015">Disulfide bond</keyword>
<keyword id="KW-0960">Knottin</keyword>
<keyword id="KW-0964">Secreted</keyword>
<keyword id="KW-0732">Signal</keyword>
<keyword id="KW-0800">Toxin</keyword>
<evidence type="ECO:0000250" key="1"/>
<evidence type="ECO:0000255" key="2"/>
<evidence type="ECO:0000305" key="3"/>
<dbReference type="EMBL" id="EU925994">
    <property type="protein sequence ID" value="ACI41326.1"/>
    <property type="molecule type" value="mRNA"/>
</dbReference>
<dbReference type="EMBL" id="FM863998">
    <property type="protein sequence ID" value="CAS03596.1"/>
    <property type="molecule type" value="mRNA"/>
</dbReference>
<dbReference type="SMR" id="B6DCR0"/>
<dbReference type="ArachnoServer" id="AS000938">
    <property type="toxin name" value="U3-lycotoxin-Ls1a"/>
</dbReference>
<dbReference type="GO" id="GO:0005576">
    <property type="term" value="C:extracellular region"/>
    <property type="evidence" value="ECO:0007669"/>
    <property type="project" value="UniProtKB-SubCell"/>
</dbReference>
<dbReference type="GO" id="GO:0090729">
    <property type="term" value="F:toxin activity"/>
    <property type="evidence" value="ECO:0007669"/>
    <property type="project" value="UniProtKB-KW"/>
</dbReference>
<dbReference type="InterPro" id="IPR019553">
    <property type="entry name" value="Spider_toxin_CSTX_knottin"/>
</dbReference>
<dbReference type="InterPro" id="IPR011142">
    <property type="entry name" value="Spider_toxin_CSTX_Knottin_CS"/>
</dbReference>
<dbReference type="Pfam" id="PF10530">
    <property type="entry name" value="Toxin_35"/>
    <property type="match status" value="1"/>
</dbReference>
<dbReference type="PROSITE" id="PS60029">
    <property type="entry name" value="SPIDER_CSTX"/>
    <property type="match status" value="1"/>
</dbReference>
<comment type="subcellular location">
    <subcellularLocation>
        <location evidence="1">Secreted</location>
    </subcellularLocation>
</comment>
<comment type="tissue specificity">
    <text>Expressed by the venom gland.</text>
</comment>
<comment type="domain">
    <text evidence="1">The presence of a 'disulfide through disulfide knot' structurally defines this protein as a knottin.</text>
</comment>
<comment type="similarity">
    <text evidence="3">Belongs to the neurotoxin 19 (CSTX) family. 01 subfamily.</text>
</comment>
<feature type="signal peptide" evidence="2">
    <location>
        <begin position="1"/>
        <end position="20"/>
    </location>
</feature>
<feature type="propeptide" id="PRO_0000401635" evidence="1">
    <location>
        <begin position="21"/>
        <end position="44"/>
    </location>
</feature>
<feature type="chain" id="PRO_0000401636" description="U3-lycotoxin-Ls1a">
    <location>
        <begin position="45"/>
        <end position="115"/>
    </location>
</feature>
<feature type="disulfide bond" evidence="1">
    <location>
        <begin position="48"/>
        <end position="63"/>
    </location>
</feature>
<feature type="disulfide bond" evidence="1">
    <location>
        <begin position="55"/>
        <end position="72"/>
    </location>
</feature>
<feature type="disulfide bond" evidence="1">
    <location>
        <begin position="62"/>
        <end position="87"/>
    </location>
</feature>
<feature type="disulfide bond" evidence="1">
    <location>
        <begin position="74"/>
        <end position="85"/>
    </location>
</feature>
<reference key="1">
    <citation type="journal article" date="2010" name="Zoology">
        <title>Transcriptome analysis of the venom glands of the Chinese wolf spider Lycosa singoriensis.</title>
        <authorList>
            <person name="Zhang Y."/>
            <person name="Chen J."/>
            <person name="Tang X."/>
            <person name="Wang F."/>
            <person name="Jiang L."/>
            <person name="Xiong X."/>
            <person name="Wang M."/>
            <person name="Rong M."/>
            <person name="Liu Z."/>
            <person name="Liang S."/>
        </authorList>
    </citation>
    <scope>NUCLEOTIDE SEQUENCE [LARGE SCALE MRNA]</scope>
    <source>
        <tissue>Venom gland</tissue>
    </source>
</reference>
<protein>
    <recommendedName>
        <fullName>U3-lycotoxin-Ls1a</fullName>
    </recommendedName>
    <alternativeName>
        <fullName>Toxin-like structure LSTX-B15</fullName>
    </alternativeName>
</protein>
<sequence>MKFVLLFGVLLLTLFSYSSAEMLDDFDQADEDELLSLIEKEEARAKECTPRFYDCSHDRHSCCRSELFKDVCTCFYPEGGDNEVCTCQQPKHLKYMEKAADKAKKFGGKIKKWFG</sequence>
<accession>B6DCR0</accession>
<proteinExistence type="evidence at transcript level"/>
<name>TX315_LYCSI</name>